<accession>Q1QVH6</accession>
<organism>
    <name type="scientific">Chromohalobacter salexigens (strain ATCC BAA-138 / DSM 3043 / CIP 106854 / NCIMB 13768 / 1H11)</name>
    <dbReference type="NCBI Taxonomy" id="290398"/>
    <lineage>
        <taxon>Bacteria</taxon>
        <taxon>Pseudomonadati</taxon>
        <taxon>Pseudomonadota</taxon>
        <taxon>Gammaproteobacteria</taxon>
        <taxon>Oceanospirillales</taxon>
        <taxon>Halomonadaceae</taxon>
        <taxon>Chromohalobacter</taxon>
    </lineage>
</organism>
<sequence>MLNTIVRKLVGSKNEREVKRMRKACEAINALEPTFEALDDASLTAKTAEFRQRLEAGESLDKLLPEAFAVVREASKRVMGMRHFDVQMVGGMTLHEGRIAEMKTGEGKTLVGTLAVYLNALTGKGVHVVTVNDYLASRDAEWMRPLYEFLGLSVGTIFSGQSSTQKREAYACDITYGTNNEFGFDYLRDNMAFSLDDKVQRSLHYAIIDEVDSILIDEARTPLIISGPVEENVDMYRRINQLSVQLEECSDEEDPTSGDFILDEKQKQVELTETGHQKLEGLLRDAEMLGQDDSLYSAQNLGLLQHVHSALRARHLYHRDVDYIVANGEVVIVDEHTGRTMHGRRWSEGLHQAVEAKEGVTIQKESQTLASTTFQNYFRLYDKLSGMTGTADTEAFEFRQIYGLDVMVIPTNRPLVRVDHNDLVYMSGEEKFEAIIEDVKTQREAGRPVLVGTASIETSEYLAKLMQQHQIPHNVLNAKQHQSEAEIISQAGRPGAVTIATNMAGRGTDIVLGGNWEAEAAALDDPSDEQIEALKAAWQERHDAVLAAGGLHVIGSERHESRRIDNQLRGRAGRQGDPGSTRFFLSLEDNLMRLFGSDRVQRLMQALGLEHGEAIEHKMVSNAVERAQKKVEGRNFDIRKQLLEYDDVSNDQRRVVYQQRDEVLAADDLSSNIAEIREQVLSEAISSYVPPQSLAEQWDLPGLQDYLKQEFNLDVPLVQWAEEDEHFHEELLRERLHDQHRGLFTSKAEAVGPELMRRFEKQVMLQVLDTRWKEHLQHMDHLRRGIHLRGYAQKNPKQEYKREAFELFQALLGNIKHDVIRILSHVQVRRQEEVDELERERRATLERERAVSQPVHEDAVASAEAVAESEEASGESADDAQPVRRDGPKVGRNDLCPCGSGKKYKHCHGKLN</sequence>
<evidence type="ECO:0000255" key="1">
    <source>
        <dbReference type="HAMAP-Rule" id="MF_01382"/>
    </source>
</evidence>
<evidence type="ECO:0000256" key="2">
    <source>
        <dbReference type="SAM" id="MobiDB-lite"/>
    </source>
</evidence>
<feature type="chain" id="PRO_0000320774" description="Protein translocase subunit SecA">
    <location>
        <begin position="1"/>
        <end position="912"/>
    </location>
</feature>
<feature type="region of interest" description="Disordered" evidence="2">
    <location>
        <begin position="847"/>
        <end position="912"/>
    </location>
</feature>
<feature type="compositionally biased region" description="Basic and acidic residues" evidence="2">
    <location>
        <begin position="847"/>
        <end position="859"/>
    </location>
</feature>
<feature type="compositionally biased region" description="Acidic residues" evidence="2">
    <location>
        <begin position="867"/>
        <end position="878"/>
    </location>
</feature>
<feature type="compositionally biased region" description="Basic and acidic residues" evidence="2">
    <location>
        <begin position="881"/>
        <end position="892"/>
    </location>
</feature>
<feature type="compositionally biased region" description="Basic residues" evidence="2">
    <location>
        <begin position="902"/>
        <end position="912"/>
    </location>
</feature>
<feature type="binding site" evidence="1">
    <location>
        <position position="87"/>
    </location>
    <ligand>
        <name>ATP</name>
        <dbReference type="ChEBI" id="CHEBI:30616"/>
    </ligand>
</feature>
<feature type="binding site" evidence="1">
    <location>
        <begin position="105"/>
        <end position="109"/>
    </location>
    <ligand>
        <name>ATP</name>
        <dbReference type="ChEBI" id="CHEBI:30616"/>
    </ligand>
</feature>
<feature type="binding site" evidence="1">
    <location>
        <position position="509"/>
    </location>
    <ligand>
        <name>ATP</name>
        <dbReference type="ChEBI" id="CHEBI:30616"/>
    </ligand>
</feature>
<feature type="binding site" evidence="1">
    <location>
        <position position="896"/>
    </location>
    <ligand>
        <name>Zn(2+)</name>
        <dbReference type="ChEBI" id="CHEBI:29105"/>
    </ligand>
</feature>
<feature type="binding site" evidence="1">
    <location>
        <position position="898"/>
    </location>
    <ligand>
        <name>Zn(2+)</name>
        <dbReference type="ChEBI" id="CHEBI:29105"/>
    </ligand>
</feature>
<feature type="binding site" evidence="1">
    <location>
        <position position="907"/>
    </location>
    <ligand>
        <name>Zn(2+)</name>
        <dbReference type="ChEBI" id="CHEBI:29105"/>
    </ligand>
</feature>
<feature type="binding site" evidence="1">
    <location>
        <position position="908"/>
    </location>
    <ligand>
        <name>Zn(2+)</name>
        <dbReference type="ChEBI" id="CHEBI:29105"/>
    </ligand>
</feature>
<gene>
    <name evidence="1" type="primary">secA</name>
    <name type="ordered locus">Csal_2181</name>
</gene>
<name>SECA_CHRSD</name>
<dbReference type="EC" id="7.4.2.8" evidence="1"/>
<dbReference type="EMBL" id="CP000285">
    <property type="protein sequence ID" value="ABE59532.1"/>
    <property type="molecule type" value="Genomic_DNA"/>
</dbReference>
<dbReference type="RefSeq" id="WP_011507478.1">
    <property type="nucleotide sequence ID" value="NC_007963.1"/>
</dbReference>
<dbReference type="SMR" id="Q1QVH6"/>
<dbReference type="STRING" id="290398.Csal_2181"/>
<dbReference type="GeneID" id="95334900"/>
<dbReference type="KEGG" id="csa:Csal_2181"/>
<dbReference type="eggNOG" id="COG0653">
    <property type="taxonomic scope" value="Bacteria"/>
</dbReference>
<dbReference type="HOGENOM" id="CLU_005314_3_0_6"/>
<dbReference type="OrthoDB" id="9805579at2"/>
<dbReference type="Proteomes" id="UP000000239">
    <property type="component" value="Chromosome"/>
</dbReference>
<dbReference type="GO" id="GO:0031522">
    <property type="term" value="C:cell envelope Sec protein transport complex"/>
    <property type="evidence" value="ECO:0007669"/>
    <property type="project" value="TreeGrafter"/>
</dbReference>
<dbReference type="GO" id="GO:0005829">
    <property type="term" value="C:cytosol"/>
    <property type="evidence" value="ECO:0007669"/>
    <property type="project" value="TreeGrafter"/>
</dbReference>
<dbReference type="GO" id="GO:0005886">
    <property type="term" value="C:plasma membrane"/>
    <property type="evidence" value="ECO:0007669"/>
    <property type="project" value="UniProtKB-SubCell"/>
</dbReference>
<dbReference type="GO" id="GO:0005524">
    <property type="term" value="F:ATP binding"/>
    <property type="evidence" value="ECO:0007669"/>
    <property type="project" value="UniProtKB-UniRule"/>
</dbReference>
<dbReference type="GO" id="GO:0046872">
    <property type="term" value="F:metal ion binding"/>
    <property type="evidence" value="ECO:0007669"/>
    <property type="project" value="UniProtKB-KW"/>
</dbReference>
<dbReference type="GO" id="GO:0008564">
    <property type="term" value="F:protein-exporting ATPase activity"/>
    <property type="evidence" value="ECO:0007669"/>
    <property type="project" value="UniProtKB-EC"/>
</dbReference>
<dbReference type="GO" id="GO:0065002">
    <property type="term" value="P:intracellular protein transmembrane transport"/>
    <property type="evidence" value="ECO:0007669"/>
    <property type="project" value="UniProtKB-UniRule"/>
</dbReference>
<dbReference type="GO" id="GO:0017038">
    <property type="term" value="P:protein import"/>
    <property type="evidence" value="ECO:0007669"/>
    <property type="project" value="InterPro"/>
</dbReference>
<dbReference type="GO" id="GO:0006605">
    <property type="term" value="P:protein targeting"/>
    <property type="evidence" value="ECO:0007669"/>
    <property type="project" value="UniProtKB-UniRule"/>
</dbReference>
<dbReference type="GO" id="GO:0043952">
    <property type="term" value="P:protein transport by the Sec complex"/>
    <property type="evidence" value="ECO:0007669"/>
    <property type="project" value="TreeGrafter"/>
</dbReference>
<dbReference type="CDD" id="cd17928">
    <property type="entry name" value="DEXDc_SecA"/>
    <property type="match status" value="1"/>
</dbReference>
<dbReference type="CDD" id="cd18803">
    <property type="entry name" value="SF2_C_secA"/>
    <property type="match status" value="1"/>
</dbReference>
<dbReference type="FunFam" id="3.40.50.300:FF:000113">
    <property type="entry name" value="Preprotein translocase subunit SecA"/>
    <property type="match status" value="1"/>
</dbReference>
<dbReference type="FunFam" id="3.90.1440.10:FF:000001">
    <property type="entry name" value="Preprotein translocase subunit SecA"/>
    <property type="match status" value="1"/>
</dbReference>
<dbReference type="FunFam" id="1.10.3060.10:FF:000003">
    <property type="entry name" value="Protein translocase subunit SecA"/>
    <property type="match status" value="1"/>
</dbReference>
<dbReference type="FunFam" id="3.40.50.300:FF:000334">
    <property type="entry name" value="Protein translocase subunit SecA"/>
    <property type="match status" value="1"/>
</dbReference>
<dbReference type="Gene3D" id="1.10.3060.10">
    <property type="entry name" value="Helical scaffold and wing domains of SecA"/>
    <property type="match status" value="1"/>
</dbReference>
<dbReference type="Gene3D" id="3.40.50.300">
    <property type="entry name" value="P-loop containing nucleotide triphosphate hydrolases"/>
    <property type="match status" value="2"/>
</dbReference>
<dbReference type="Gene3D" id="3.90.1440.10">
    <property type="entry name" value="SecA, preprotein cross-linking domain"/>
    <property type="match status" value="1"/>
</dbReference>
<dbReference type="HAMAP" id="MF_01382">
    <property type="entry name" value="SecA"/>
    <property type="match status" value="1"/>
</dbReference>
<dbReference type="InterPro" id="IPR014001">
    <property type="entry name" value="Helicase_ATP-bd"/>
</dbReference>
<dbReference type="InterPro" id="IPR001650">
    <property type="entry name" value="Helicase_C-like"/>
</dbReference>
<dbReference type="InterPro" id="IPR027417">
    <property type="entry name" value="P-loop_NTPase"/>
</dbReference>
<dbReference type="InterPro" id="IPR004027">
    <property type="entry name" value="SEC_C_motif"/>
</dbReference>
<dbReference type="InterPro" id="IPR000185">
    <property type="entry name" value="SecA"/>
</dbReference>
<dbReference type="InterPro" id="IPR020937">
    <property type="entry name" value="SecA_CS"/>
</dbReference>
<dbReference type="InterPro" id="IPR011115">
    <property type="entry name" value="SecA_DEAD"/>
</dbReference>
<dbReference type="InterPro" id="IPR014018">
    <property type="entry name" value="SecA_motor_DEAD"/>
</dbReference>
<dbReference type="InterPro" id="IPR011130">
    <property type="entry name" value="SecA_preprotein_X-link_dom"/>
</dbReference>
<dbReference type="InterPro" id="IPR044722">
    <property type="entry name" value="SecA_SF2_C"/>
</dbReference>
<dbReference type="InterPro" id="IPR011116">
    <property type="entry name" value="SecA_Wing/Scaffold"/>
</dbReference>
<dbReference type="InterPro" id="IPR036266">
    <property type="entry name" value="SecA_Wing/Scaffold_sf"/>
</dbReference>
<dbReference type="InterPro" id="IPR036670">
    <property type="entry name" value="SecA_X-link_sf"/>
</dbReference>
<dbReference type="NCBIfam" id="NF009538">
    <property type="entry name" value="PRK12904.1"/>
    <property type="match status" value="1"/>
</dbReference>
<dbReference type="NCBIfam" id="TIGR00963">
    <property type="entry name" value="secA"/>
    <property type="match status" value="1"/>
</dbReference>
<dbReference type="PANTHER" id="PTHR30612:SF0">
    <property type="entry name" value="CHLOROPLAST PROTEIN-TRANSPORTING ATPASE"/>
    <property type="match status" value="1"/>
</dbReference>
<dbReference type="PANTHER" id="PTHR30612">
    <property type="entry name" value="SECA INNER MEMBRANE COMPONENT OF SEC PROTEIN SECRETION SYSTEM"/>
    <property type="match status" value="1"/>
</dbReference>
<dbReference type="Pfam" id="PF21090">
    <property type="entry name" value="P-loop_SecA"/>
    <property type="match status" value="1"/>
</dbReference>
<dbReference type="Pfam" id="PF02810">
    <property type="entry name" value="SEC-C"/>
    <property type="match status" value="1"/>
</dbReference>
<dbReference type="Pfam" id="PF07517">
    <property type="entry name" value="SecA_DEAD"/>
    <property type="match status" value="1"/>
</dbReference>
<dbReference type="Pfam" id="PF01043">
    <property type="entry name" value="SecA_PP_bind"/>
    <property type="match status" value="1"/>
</dbReference>
<dbReference type="Pfam" id="PF07516">
    <property type="entry name" value="SecA_SW"/>
    <property type="match status" value="1"/>
</dbReference>
<dbReference type="PRINTS" id="PR00906">
    <property type="entry name" value="SECA"/>
</dbReference>
<dbReference type="SMART" id="SM00957">
    <property type="entry name" value="SecA_DEAD"/>
    <property type="match status" value="1"/>
</dbReference>
<dbReference type="SMART" id="SM00958">
    <property type="entry name" value="SecA_PP_bind"/>
    <property type="match status" value="1"/>
</dbReference>
<dbReference type="SUPFAM" id="SSF81886">
    <property type="entry name" value="Helical scaffold and wing domains of SecA"/>
    <property type="match status" value="1"/>
</dbReference>
<dbReference type="SUPFAM" id="SSF52540">
    <property type="entry name" value="P-loop containing nucleoside triphosphate hydrolases"/>
    <property type="match status" value="2"/>
</dbReference>
<dbReference type="SUPFAM" id="SSF81767">
    <property type="entry name" value="Pre-protein crosslinking domain of SecA"/>
    <property type="match status" value="1"/>
</dbReference>
<dbReference type="PROSITE" id="PS01312">
    <property type="entry name" value="SECA"/>
    <property type="match status" value="1"/>
</dbReference>
<dbReference type="PROSITE" id="PS51196">
    <property type="entry name" value="SECA_MOTOR_DEAD"/>
    <property type="match status" value="1"/>
</dbReference>
<comment type="function">
    <text evidence="1">Part of the Sec protein translocase complex. Interacts with the SecYEG preprotein conducting channel. Has a central role in coupling the hydrolysis of ATP to the transfer of proteins into and across the cell membrane, serving both as a receptor for the preprotein-SecB complex and as an ATP-driven molecular motor driving the stepwise translocation of polypeptide chains across the membrane.</text>
</comment>
<comment type="catalytic activity">
    <reaction evidence="1">
        <text>ATP + H2O + cellular proteinSide 1 = ADP + phosphate + cellular proteinSide 2.</text>
        <dbReference type="EC" id="7.4.2.8"/>
    </reaction>
</comment>
<comment type="cofactor">
    <cofactor evidence="1">
        <name>Zn(2+)</name>
        <dbReference type="ChEBI" id="CHEBI:29105"/>
    </cofactor>
    <text evidence="1">May bind 1 zinc ion per subunit.</text>
</comment>
<comment type="subunit">
    <text evidence="1">Monomer and homodimer. Part of the essential Sec protein translocation apparatus which comprises SecA, SecYEG and auxiliary proteins SecDF-YajC and YidC.</text>
</comment>
<comment type="subcellular location">
    <subcellularLocation>
        <location evidence="1">Cell inner membrane</location>
        <topology evidence="1">Peripheral membrane protein</topology>
        <orientation evidence="1">Cytoplasmic side</orientation>
    </subcellularLocation>
    <subcellularLocation>
        <location evidence="1">Cytoplasm</location>
    </subcellularLocation>
    <text evidence="1">Distribution is 50-50.</text>
</comment>
<comment type="similarity">
    <text evidence="1">Belongs to the SecA family.</text>
</comment>
<reference key="1">
    <citation type="journal article" date="2011" name="Stand. Genomic Sci.">
        <title>Complete genome sequence of the halophilic and highly halotolerant Chromohalobacter salexigens type strain (1H11(T)).</title>
        <authorList>
            <person name="Copeland A."/>
            <person name="O'Connor K."/>
            <person name="Lucas S."/>
            <person name="Lapidus A."/>
            <person name="Berry K.W."/>
            <person name="Detter J.C."/>
            <person name="Del Rio T.G."/>
            <person name="Hammon N."/>
            <person name="Dalin E."/>
            <person name="Tice H."/>
            <person name="Pitluck S."/>
            <person name="Bruce D."/>
            <person name="Goodwin L."/>
            <person name="Han C."/>
            <person name="Tapia R."/>
            <person name="Saunders E."/>
            <person name="Schmutz J."/>
            <person name="Brettin T."/>
            <person name="Larimer F."/>
            <person name="Land M."/>
            <person name="Hauser L."/>
            <person name="Vargas C."/>
            <person name="Nieto J.J."/>
            <person name="Kyrpides N.C."/>
            <person name="Ivanova N."/>
            <person name="Goker M."/>
            <person name="Klenk H.P."/>
            <person name="Csonka L.N."/>
            <person name="Woyke T."/>
        </authorList>
    </citation>
    <scope>NUCLEOTIDE SEQUENCE [LARGE SCALE GENOMIC DNA]</scope>
    <source>
        <strain>ATCC BAA-138 / DSM 3043 / CIP 106854 / NCIMB 13768 / 1H11</strain>
    </source>
</reference>
<keyword id="KW-0067">ATP-binding</keyword>
<keyword id="KW-0997">Cell inner membrane</keyword>
<keyword id="KW-1003">Cell membrane</keyword>
<keyword id="KW-0963">Cytoplasm</keyword>
<keyword id="KW-0472">Membrane</keyword>
<keyword id="KW-0479">Metal-binding</keyword>
<keyword id="KW-0547">Nucleotide-binding</keyword>
<keyword id="KW-0653">Protein transport</keyword>
<keyword id="KW-1185">Reference proteome</keyword>
<keyword id="KW-1278">Translocase</keyword>
<keyword id="KW-0811">Translocation</keyword>
<keyword id="KW-0813">Transport</keyword>
<keyword id="KW-0862">Zinc</keyword>
<proteinExistence type="inferred from homology"/>
<protein>
    <recommendedName>
        <fullName evidence="1">Protein translocase subunit SecA</fullName>
        <ecNumber evidence="1">7.4.2.8</ecNumber>
    </recommendedName>
</protein>